<keyword id="KW-0217">Developmental protein</keyword>
<keyword id="KW-0238">DNA-binding</keyword>
<keyword id="KW-0371">Homeobox</keyword>
<keyword id="KW-0539">Nucleus</keyword>
<keyword id="KW-1185">Reference proteome</keyword>
<keyword id="KW-0716">Sensory transduction</keyword>
<keyword id="KW-0804">Transcription</keyword>
<keyword id="KW-0805">Transcription regulation</keyword>
<keyword id="KW-0844">Vision</keyword>
<reference key="1">
    <citation type="journal article" date="2001" name="Mech. Dev.">
        <title>Vsx1, a rapidly evolving paired-like homeobox gene expressed in cone bipolar cells.</title>
        <authorList>
            <person name="Chow R.L."/>
            <person name="Snow B."/>
            <person name="Novak J."/>
            <person name="Looser J."/>
            <person name="Freund C."/>
            <person name="Vidgen D."/>
            <person name="Ploder L."/>
            <person name="McInnes R.R."/>
        </authorList>
    </citation>
    <scope>NUCLEOTIDE SEQUENCE [MRNA]</scope>
    <source>
        <strain>BALB/cJ</strain>
        <tissue>Retina</tissue>
    </source>
</reference>
<reference key="2">
    <citation type="journal article" date="2001" name="Biochem. Biophys. Res. Commun.">
        <title>Isolation and characterization of Vsx1, a novel mouse CVC paired-like homeobox gene expressed during embryogenesis and in the retina.</title>
        <authorList>
            <person name="Ohtoshi A."/>
            <person name="Justice M.J."/>
            <person name="Behringer R.R."/>
        </authorList>
    </citation>
    <scope>NUCLEOTIDE SEQUENCE [MRNA]</scope>
    <source>
        <strain>SWR/J</strain>
    </source>
</reference>
<reference key="3">
    <citation type="journal article" date="2005" name="Jpn. J. Ophthalmol.">
        <title>Expression of rinx/vsx1 during postnatal eye development in cone-bipolar, differentiating ganglion, and lens fiber cells.</title>
        <authorList>
            <person name="Hayashi T."/>
            <person name="Huang J."/>
            <person name="Deeb S.S."/>
        </authorList>
    </citation>
    <scope>NUCLEOTIDE SEQUENCE</scope>
    <scope>TISSUE SPECIFICITY</scope>
    <source>
        <strain>129/SvJ</strain>
    </source>
</reference>
<reference key="4">
    <citation type="journal article" date="2004" name="Genome Res.">
        <title>The status, quality, and expansion of the NIH full-length cDNA project: the Mammalian Gene Collection (MGC).</title>
        <authorList>
            <consortium name="The MGC Project Team"/>
        </authorList>
    </citation>
    <scope>NUCLEOTIDE SEQUENCE [LARGE SCALE MRNA]</scope>
    <source>
        <tissue>Eye</tissue>
    </source>
</reference>
<reference key="5">
    <citation type="journal article" date="2008" name="Brain Res.">
        <title>Negative regulation of Vsx1 by its paralog Chx10/Vsx2 is conserved in the vertebrate retina.</title>
        <authorList>
            <person name="Clark A.M."/>
            <person name="Yun S."/>
            <person name="Veien E.S."/>
            <person name="Wu Y.Y."/>
            <person name="Chow R.L."/>
            <person name="Dorsky R.I."/>
            <person name="Levine E.M."/>
        </authorList>
    </citation>
    <scope>FUNCTION</scope>
    <scope>SUBCELLULAR LOCATION</scope>
    <scope>TISSUE SPECIFICITY</scope>
    <scope>DISRUPTION PHENOTYPE</scope>
</reference>
<evidence type="ECO:0000250" key="1">
    <source>
        <dbReference type="UniProtKB" id="Q9NZR4"/>
    </source>
</evidence>
<evidence type="ECO:0000255" key="2"/>
<evidence type="ECO:0000255" key="3">
    <source>
        <dbReference type="PROSITE-ProRule" id="PRU00108"/>
    </source>
</evidence>
<evidence type="ECO:0000255" key="4">
    <source>
        <dbReference type="PROSITE-ProRule" id="PRU00829"/>
    </source>
</evidence>
<evidence type="ECO:0000256" key="5">
    <source>
        <dbReference type="SAM" id="MobiDB-lite"/>
    </source>
</evidence>
<evidence type="ECO:0000269" key="6">
    <source>
    </source>
</evidence>
<evidence type="ECO:0000269" key="7">
    <source>
    </source>
</evidence>
<evidence type="ECO:0000305" key="8"/>
<proteinExistence type="evidence at protein level"/>
<feature type="chain" id="PRO_0000049356" description="Visual system homeobox 1">
    <location>
        <begin position="1"/>
        <end position="363"/>
    </location>
</feature>
<feature type="domain" description="CVC" evidence="4">
    <location>
        <begin position="231"/>
        <end position="283"/>
    </location>
</feature>
<feature type="DNA-binding region" description="Homeobox" evidence="3">
    <location>
        <begin position="171"/>
        <end position="230"/>
    </location>
</feature>
<feature type="region of interest" description="Disordered" evidence="5">
    <location>
        <begin position="1"/>
        <end position="25"/>
    </location>
</feature>
<feature type="region of interest" description="Disordered" evidence="5">
    <location>
        <begin position="42"/>
        <end position="66"/>
    </location>
</feature>
<feature type="region of interest" description="Disordered" evidence="5">
    <location>
        <begin position="122"/>
        <end position="166"/>
    </location>
</feature>
<feature type="region of interest" description="Disordered" evidence="5">
    <location>
        <begin position="300"/>
        <end position="363"/>
    </location>
</feature>
<feature type="short sequence motif" description="Octapeptide motif">
    <location>
        <begin position="31"/>
        <end position="38"/>
    </location>
</feature>
<feature type="short sequence motif" description="Nuclear localization signal" evidence="2">
    <location>
        <begin position="168"/>
        <end position="173"/>
    </location>
</feature>
<feature type="compositionally biased region" description="Basic and acidic residues" evidence="5">
    <location>
        <begin position="1"/>
        <end position="12"/>
    </location>
</feature>
<feature type="compositionally biased region" description="Polar residues" evidence="5">
    <location>
        <begin position="137"/>
        <end position="151"/>
    </location>
</feature>
<feature type="compositionally biased region" description="Basic and acidic residues" evidence="5">
    <location>
        <begin position="300"/>
        <end position="318"/>
    </location>
</feature>
<organism>
    <name type="scientific">Mus musculus</name>
    <name type="common">Mouse</name>
    <dbReference type="NCBI Taxonomy" id="10090"/>
    <lineage>
        <taxon>Eukaryota</taxon>
        <taxon>Metazoa</taxon>
        <taxon>Chordata</taxon>
        <taxon>Craniata</taxon>
        <taxon>Vertebrata</taxon>
        <taxon>Euteleostomi</taxon>
        <taxon>Mammalia</taxon>
        <taxon>Eutheria</taxon>
        <taxon>Euarchontoglires</taxon>
        <taxon>Glires</taxon>
        <taxon>Rodentia</taxon>
        <taxon>Myomorpha</taxon>
        <taxon>Muroidea</taxon>
        <taxon>Muridae</taxon>
        <taxon>Murinae</taxon>
        <taxon>Mus</taxon>
        <taxon>Mus</taxon>
    </lineage>
</organism>
<comment type="function">
    <text evidence="1 7">Binds to the 37-bp core of the locus control region (LCR) of the red/green visual pigment gene cluster (By similarity). May regulate the activity of the LCR and the cone opsin genes at earlier stages of development (By similarity). Dispensable in early retinal development (PubMed:17919464).</text>
</comment>
<comment type="subcellular location">
    <subcellularLocation>
        <location evidence="7">Nucleus</location>
    </subcellularLocation>
</comment>
<comment type="tissue specificity">
    <text evidence="6 7">Expressed in the postnatal retina (at protein level) (PubMed:17919464). In the adult, expressed exclusively in the cells of the neural retina with expression restricted to postnatal cone bipolar interneurons (PubMed:15838724).</text>
</comment>
<comment type="developmental stage">
    <text>Expressed at P5, solely within the inner nuclear layer (INL) of the central neuroretina. By days P6 and P7, expression expands peripherally during neurogenesis. By P12, expression is restricted to the outer margin of the INL and reaches the outer periphery of the neuroretina.</text>
</comment>
<comment type="disruption phenotype">
    <text evidence="7">At embryonic day 14.5 ocular morphology is normal as is expression and localization of retinal transcription and cell cycle regulatory proteins.</text>
</comment>
<comment type="similarity">
    <text evidence="8">Belongs to the paired homeobox family.</text>
</comment>
<gene>
    <name type="primary">Vsx1</name>
    <name type="synonym">Rinx</name>
</gene>
<dbReference type="EMBL" id="AY056825">
    <property type="protein sequence ID" value="AAL11431.1"/>
    <property type="molecule type" value="mRNA"/>
</dbReference>
<dbReference type="EMBL" id="AF395732">
    <property type="protein sequence ID" value="AAL08947.1"/>
    <property type="molecule type" value="mRNA"/>
</dbReference>
<dbReference type="EMBL" id="AF391757">
    <property type="protein sequence ID" value="AAL09584.1"/>
    <property type="molecule type" value="Genomic_DNA"/>
</dbReference>
<dbReference type="EMBL" id="AF391758">
    <property type="protein sequence ID" value="AAL09585.1"/>
    <property type="molecule type" value="mRNA"/>
</dbReference>
<dbReference type="EMBL" id="BC057647">
    <property type="protein sequence ID" value="AAH57647.1"/>
    <property type="molecule type" value="mRNA"/>
</dbReference>
<dbReference type="CCDS" id="CCDS16860.1"/>
<dbReference type="PIR" id="JC7750">
    <property type="entry name" value="JC7750"/>
</dbReference>
<dbReference type="RefSeq" id="NP_473409.1">
    <property type="nucleotide sequence ID" value="NM_054068.2"/>
</dbReference>
<dbReference type="SMR" id="Q91V10"/>
<dbReference type="BioGRID" id="227900">
    <property type="interactions" value="1"/>
</dbReference>
<dbReference type="FunCoup" id="Q91V10">
    <property type="interactions" value="1304"/>
</dbReference>
<dbReference type="IntAct" id="Q91V10">
    <property type="interactions" value="1"/>
</dbReference>
<dbReference type="STRING" id="10090.ENSMUSP00000039088"/>
<dbReference type="GlyGen" id="Q91V10">
    <property type="glycosylation" value="1 site"/>
</dbReference>
<dbReference type="PhosphoSitePlus" id="Q91V10"/>
<dbReference type="PaxDb" id="10090-ENSMUSP00000039088"/>
<dbReference type="ProteomicsDB" id="297826"/>
<dbReference type="Antibodypedia" id="9932">
    <property type="antibodies" value="158 antibodies from 24 providers"/>
</dbReference>
<dbReference type="DNASU" id="114889"/>
<dbReference type="Ensembl" id="ENSMUST00000046095.10">
    <property type="protein sequence ID" value="ENSMUSP00000039088.9"/>
    <property type="gene ID" value="ENSMUSG00000033080.10"/>
</dbReference>
<dbReference type="GeneID" id="114889"/>
<dbReference type="KEGG" id="mmu:114889"/>
<dbReference type="UCSC" id="uc008muh.2">
    <property type="organism name" value="mouse"/>
</dbReference>
<dbReference type="AGR" id="MGI:1890816"/>
<dbReference type="CTD" id="30813"/>
<dbReference type="MGI" id="MGI:1890816">
    <property type="gene designation" value="Vsx1"/>
</dbReference>
<dbReference type="VEuPathDB" id="HostDB:ENSMUSG00000033080"/>
<dbReference type="eggNOG" id="KOG0494">
    <property type="taxonomic scope" value="Eukaryota"/>
</dbReference>
<dbReference type="GeneTree" id="ENSGT00940000160793"/>
<dbReference type="HOGENOM" id="CLU_049243_1_0_1"/>
<dbReference type="InParanoid" id="Q91V10"/>
<dbReference type="OMA" id="WGSDHLK"/>
<dbReference type="OrthoDB" id="6159439at2759"/>
<dbReference type="PhylomeDB" id="Q91V10"/>
<dbReference type="TreeFam" id="TF350743"/>
<dbReference type="BioGRID-ORCS" id="114889">
    <property type="hits" value="6 hits in 77 CRISPR screens"/>
</dbReference>
<dbReference type="PRO" id="PR:Q91V10"/>
<dbReference type="Proteomes" id="UP000000589">
    <property type="component" value="Chromosome 2"/>
</dbReference>
<dbReference type="RNAct" id="Q91V10">
    <property type="molecule type" value="protein"/>
</dbReference>
<dbReference type="Bgee" id="ENSMUSG00000033080">
    <property type="expression patterns" value="Expressed in retinal neural layer and 10 other cell types or tissues"/>
</dbReference>
<dbReference type="ExpressionAtlas" id="Q91V10">
    <property type="expression patterns" value="baseline and differential"/>
</dbReference>
<dbReference type="GO" id="GO:0005634">
    <property type="term" value="C:nucleus"/>
    <property type="evidence" value="ECO:0000314"/>
    <property type="project" value="MGI"/>
</dbReference>
<dbReference type="GO" id="GO:0000981">
    <property type="term" value="F:DNA-binding transcription factor activity, RNA polymerase II-specific"/>
    <property type="evidence" value="ECO:0007669"/>
    <property type="project" value="InterPro"/>
</dbReference>
<dbReference type="GO" id="GO:1990837">
    <property type="term" value="F:sequence-specific double-stranded DNA binding"/>
    <property type="evidence" value="ECO:0007669"/>
    <property type="project" value="Ensembl"/>
</dbReference>
<dbReference type="GO" id="GO:0048666">
    <property type="term" value="P:neuron development"/>
    <property type="evidence" value="ECO:0000315"/>
    <property type="project" value="MGI"/>
</dbReference>
<dbReference type="GO" id="GO:0042551">
    <property type="term" value="P:neuron maturation"/>
    <property type="evidence" value="ECO:0000316"/>
    <property type="project" value="MGI"/>
</dbReference>
<dbReference type="GO" id="GO:0060040">
    <property type="term" value="P:retinal bipolar neuron differentiation"/>
    <property type="evidence" value="ECO:0000315"/>
    <property type="project" value="MGI"/>
</dbReference>
<dbReference type="GO" id="GO:0007601">
    <property type="term" value="P:visual perception"/>
    <property type="evidence" value="ECO:0000315"/>
    <property type="project" value="MGI"/>
</dbReference>
<dbReference type="CDD" id="cd00086">
    <property type="entry name" value="homeodomain"/>
    <property type="match status" value="1"/>
</dbReference>
<dbReference type="FunFam" id="1.10.10.60:FF:000065">
    <property type="entry name" value="Visual system homeobox 1"/>
    <property type="match status" value="1"/>
</dbReference>
<dbReference type="Gene3D" id="1.10.10.60">
    <property type="entry name" value="Homeodomain-like"/>
    <property type="match status" value="1"/>
</dbReference>
<dbReference type="InterPro" id="IPR023339">
    <property type="entry name" value="CVC"/>
</dbReference>
<dbReference type="InterPro" id="IPR001356">
    <property type="entry name" value="HD"/>
</dbReference>
<dbReference type="InterPro" id="IPR017970">
    <property type="entry name" value="Homeobox_CS"/>
</dbReference>
<dbReference type="InterPro" id="IPR051775">
    <property type="entry name" value="Homeobox_domain"/>
</dbReference>
<dbReference type="InterPro" id="IPR009057">
    <property type="entry name" value="Homeodomain-like_sf"/>
</dbReference>
<dbReference type="PANTHER" id="PTHR24323">
    <property type="entry name" value="CEH-10 HOMEODOMAIN-CONTAINING HOMOLOG"/>
    <property type="match status" value="1"/>
</dbReference>
<dbReference type="PANTHER" id="PTHR24323:SF3">
    <property type="entry name" value="VISUAL SYSTEM HOMEOBOX 1"/>
    <property type="match status" value="1"/>
</dbReference>
<dbReference type="Pfam" id="PF00046">
    <property type="entry name" value="Homeodomain"/>
    <property type="match status" value="1"/>
</dbReference>
<dbReference type="SMART" id="SM00389">
    <property type="entry name" value="HOX"/>
    <property type="match status" value="1"/>
</dbReference>
<dbReference type="SUPFAM" id="SSF46689">
    <property type="entry name" value="Homeodomain-like"/>
    <property type="match status" value="1"/>
</dbReference>
<dbReference type="PROSITE" id="PS51496">
    <property type="entry name" value="CVC"/>
    <property type="match status" value="1"/>
</dbReference>
<dbReference type="PROSITE" id="PS00027">
    <property type="entry name" value="HOMEOBOX_1"/>
    <property type="match status" value="1"/>
</dbReference>
<dbReference type="PROSITE" id="PS50071">
    <property type="entry name" value="HOMEOBOX_2"/>
    <property type="match status" value="1"/>
</dbReference>
<sequence length="363" mass="38755">MTGRDGLSDARSRSRALAPGCPPTGSRLRSFAINDLLGLEADLPTPAEPGLRSNSGDPAEAIGSGPGPGPGLCGSCPARGALPLGLGLLCGFGAQPPSAAAAARARCLLLADLRLLPSAGPEPAVAQGPVHPPPALGSQQRSESVSTSDGDSPSEEKNDPKMSLILGKRKKRRHRTVFTAHQLEELEKAFGEAHYPDVYAREMLAAKTELPEDRIQVWFQNRRAKWRKREKRWGGSSVMAEYGLYGAMVRHCIPLPDSVLNSADSLQGSCAPWLLGMHKKSTGMRKPESEDKLAGLWEFDHLKKGANKDEDGPERGPDETTQNPENSLEDVAIDLSSSSRQETKKMPPGSSTQLPQPPQVGAS</sequence>
<name>VSX1_MOUSE</name>
<protein>
    <recommendedName>
        <fullName>Visual system homeobox 1</fullName>
    </recommendedName>
    <alternativeName>
        <fullName>Homeodomain protein RINX</fullName>
    </alternativeName>
    <alternativeName>
        <fullName>Retinal inner nuclear layer homeobox protein</fullName>
    </alternativeName>
    <alternativeName>
        <fullName>Transcription factor VSX1</fullName>
    </alternativeName>
</protein>
<accession>Q91V10</accession>